<name>GLND_BRUA4</name>
<gene>
    <name evidence="1" type="primary">glnD</name>
    <name type="ordered locus">Oant_0157</name>
</gene>
<reference key="1">
    <citation type="journal article" date="2011" name="J. Bacteriol.">
        <title>Genome of Ochrobactrum anthropi ATCC 49188 T, a versatile opportunistic pathogen and symbiont of several eukaryotic hosts.</title>
        <authorList>
            <person name="Chain P.S."/>
            <person name="Lang D.M."/>
            <person name="Comerci D.J."/>
            <person name="Malfatti S.A."/>
            <person name="Vergez L.M."/>
            <person name="Shin M."/>
            <person name="Ugalde R.A."/>
            <person name="Garcia E."/>
            <person name="Tolmasky M.E."/>
        </authorList>
    </citation>
    <scope>NUCLEOTIDE SEQUENCE [LARGE SCALE GENOMIC DNA]</scope>
    <source>
        <strain>ATCC 49188 / DSM 6882 / CCUG 24695 / JCM 21032 / LMG 3331 / NBRC 15819 / NCTC 12168 / Alc 37</strain>
    </source>
</reference>
<organism>
    <name type="scientific">Brucella anthropi (strain ATCC 49188 / DSM 6882 / CCUG 24695 / JCM 21032 / LMG 3331 / NBRC 15819 / NCTC 12168 / Alc 37)</name>
    <name type="common">Ochrobactrum anthropi</name>
    <dbReference type="NCBI Taxonomy" id="439375"/>
    <lineage>
        <taxon>Bacteria</taxon>
        <taxon>Pseudomonadati</taxon>
        <taxon>Pseudomonadota</taxon>
        <taxon>Alphaproteobacteria</taxon>
        <taxon>Hyphomicrobiales</taxon>
        <taxon>Brucellaceae</taxon>
        <taxon>Brucella/Ochrobactrum group</taxon>
        <taxon>Brucella</taxon>
    </lineage>
</organism>
<sequence>MSAHDLKLEEIVNPETLRRKLNELADSTDENYTSPTVRKVVLQALKDALVRGRANAEGMLMKDGGGTLCAKRLSFLMDTLIEALFEFATTKAYPMINPSKAENMAIVAVGGYGRGGLAPGSDIDLLFLLPYKQTPWGEQVVEYMLYMLWDMGLKVGHSTRNIDECIRLSREDMTIRTAILDARFLTGNRELFKTLVTRFDEEIVKDTGPEFIQAKLAERDQRHRKAGETRYLVEPNVKEGKGGQRDLHTLFWITKYFYRVKTKEELVKLGVLSRAELKLFNKAEDFLWAVRCHMHFATLKAEERLSFDIQPEIAQRLGYTAHPGQNYVERFMKHYFLVAKDVGDLTRIISAALEEQQAKHVPGFNRIFLTFSRRKRKLSADGDFVSENHRINIARPEVFKEDPVNIIRLFHLADKHGLEFHPEAMQSLTRSLKLINSDLRENPEANKLFLEILTSPRNPELILRRMNESGVLGKFIPDFGKIVAMMQFNMYHHYTVDEHLLRCIAVLSEIEHGELENEHPLSNHLITTVKRDRNLLYVALLLHDIAKGRPEDHSVAGARIARRLGPRLGLTPTETETVEWLVREHLTMSMVAQSRDLNDRKTIIDFADTVQTMERLKLLLILTVCDIKAVGPGVWNGWKGQLLRTLFYETELVLTGGFSELSRADRDHQAREALADRLSDWPKDKRDAYLALHYTNYFLTVSLEDQVRHAHFIREADRNERALATMAKPHTFEAVTEITVLAPDHPRLLSIITGACAAAGANIVDAQIFTTGDGRALDTILISREFDTDDDERRRAERVGKVIEDVLSGKAHLPDVLAKRTKPKRAAKAFKVEPRVEINNTLSNKFTVIEVEGLDRPGLLSELTGLISDLSLDIASAHITTFGEKVIDSFYVTDLVGHKISNATRQGNIRRKLLGVLSGENGSKTNGRSSQAAA</sequence>
<feature type="chain" id="PRO_1000022349" description="Bifunctional uridylyltransferase/uridylyl-removing enzyme">
    <location>
        <begin position="1"/>
        <end position="934"/>
    </location>
</feature>
<feature type="domain" description="HD" evidence="2">
    <location>
        <begin position="496"/>
        <end position="613"/>
    </location>
</feature>
<feature type="domain" description="ACT 1" evidence="1">
    <location>
        <begin position="737"/>
        <end position="819"/>
    </location>
</feature>
<feature type="domain" description="ACT 2" evidence="1">
    <location>
        <begin position="848"/>
        <end position="931"/>
    </location>
</feature>
<feature type="region of interest" description="Uridylyltransferase">
    <location>
        <begin position="1"/>
        <end position="379"/>
    </location>
</feature>
<feature type="region of interest" description="Uridylyl-removing">
    <location>
        <begin position="380"/>
        <end position="736"/>
    </location>
</feature>
<dbReference type="EC" id="2.7.7.59" evidence="1"/>
<dbReference type="EC" id="3.1.4.-" evidence="1"/>
<dbReference type="EMBL" id="CP000758">
    <property type="protein sequence ID" value="ABS12888.1"/>
    <property type="molecule type" value="Genomic_DNA"/>
</dbReference>
<dbReference type="RefSeq" id="WP_011982362.1">
    <property type="nucleotide sequence ID" value="NC_009667.1"/>
</dbReference>
<dbReference type="SMR" id="A6WV84"/>
<dbReference type="STRING" id="439375.Oant_0157"/>
<dbReference type="KEGG" id="oan:Oant_0157"/>
<dbReference type="PATRIC" id="fig|439375.7.peg.167"/>
<dbReference type="eggNOG" id="COG2844">
    <property type="taxonomic scope" value="Bacteria"/>
</dbReference>
<dbReference type="HOGENOM" id="CLU_012833_1_0_5"/>
<dbReference type="PhylomeDB" id="A6WV84"/>
<dbReference type="Proteomes" id="UP000002301">
    <property type="component" value="Chromosome 1"/>
</dbReference>
<dbReference type="GO" id="GO:0008773">
    <property type="term" value="F:[protein-PII] uridylyltransferase activity"/>
    <property type="evidence" value="ECO:0007669"/>
    <property type="project" value="UniProtKB-UniRule"/>
</dbReference>
<dbReference type="GO" id="GO:0008081">
    <property type="term" value="F:phosphoric diester hydrolase activity"/>
    <property type="evidence" value="ECO:0007669"/>
    <property type="project" value="UniProtKB-UniRule"/>
</dbReference>
<dbReference type="GO" id="GO:0006808">
    <property type="term" value="P:regulation of nitrogen utilization"/>
    <property type="evidence" value="ECO:0007669"/>
    <property type="project" value="UniProtKB-UniRule"/>
</dbReference>
<dbReference type="CDD" id="cd04899">
    <property type="entry name" value="ACT_ACR-UUR-like_2"/>
    <property type="match status" value="1"/>
</dbReference>
<dbReference type="CDD" id="cd04900">
    <property type="entry name" value="ACT_UUR-like_1"/>
    <property type="match status" value="1"/>
</dbReference>
<dbReference type="CDD" id="cd00077">
    <property type="entry name" value="HDc"/>
    <property type="match status" value="1"/>
</dbReference>
<dbReference type="CDD" id="cd05401">
    <property type="entry name" value="NT_GlnE_GlnD_like"/>
    <property type="match status" value="1"/>
</dbReference>
<dbReference type="Gene3D" id="3.30.70.260">
    <property type="match status" value="1"/>
</dbReference>
<dbReference type="Gene3D" id="3.30.460.10">
    <property type="entry name" value="Beta Polymerase, domain 2"/>
    <property type="match status" value="1"/>
</dbReference>
<dbReference type="Gene3D" id="1.10.3090.10">
    <property type="entry name" value="cca-adding enzyme, domain 2"/>
    <property type="match status" value="1"/>
</dbReference>
<dbReference type="HAMAP" id="MF_00277">
    <property type="entry name" value="PII_uridylyl_transf"/>
    <property type="match status" value="1"/>
</dbReference>
<dbReference type="InterPro" id="IPR045865">
    <property type="entry name" value="ACT-like_dom_sf"/>
</dbReference>
<dbReference type="InterPro" id="IPR002912">
    <property type="entry name" value="ACT_dom"/>
</dbReference>
<dbReference type="InterPro" id="IPR003607">
    <property type="entry name" value="HD/PDEase_dom"/>
</dbReference>
<dbReference type="InterPro" id="IPR006674">
    <property type="entry name" value="HD_domain"/>
</dbReference>
<dbReference type="InterPro" id="IPR043519">
    <property type="entry name" value="NT_sf"/>
</dbReference>
<dbReference type="InterPro" id="IPR013546">
    <property type="entry name" value="PII_UdlTrfase/GS_AdlTrfase"/>
</dbReference>
<dbReference type="InterPro" id="IPR002934">
    <property type="entry name" value="Polymerase_NTP_transf_dom"/>
</dbReference>
<dbReference type="InterPro" id="IPR010043">
    <property type="entry name" value="UTase/UR"/>
</dbReference>
<dbReference type="NCBIfam" id="NF003467">
    <property type="entry name" value="PRK05092.1"/>
    <property type="match status" value="1"/>
</dbReference>
<dbReference type="NCBIfam" id="TIGR01693">
    <property type="entry name" value="UTase_glnD"/>
    <property type="match status" value="1"/>
</dbReference>
<dbReference type="PANTHER" id="PTHR47320">
    <property type="entry name" value="BIFUNCTIONAL URIDYLYLTRANSFERASE/URIDYLYL-REMOVING ENZYME"/>
    <property type="match status" value="1"/>
</dbReference>
<dbReference type="PANTHER" id="PTHR47320:SF1">
    <property type="entry name" value="BIFUNCTIONAL URIDYLYLTRANSFERASE_URIDYLYL-REMOVING ENZYME"/>
    <property type="match status" value="1"/>
</dbReference>
<dbReference type="Pfam" id="PF01842">
    <property type="entry name" value="ACT"/>
    <property type="match status" value="2"/>
</dbReference>
<dbReference type="Pfam" id="PF08335">
    <property type="entry name" value="GlnD_UR_UTase"/>
    <property type="match status" value="1"/>
</dbReference>
<dbReference type="Pfam" id="PF01966">
    <property type="entry name" value="HD"/>
    <property type="match status" value="1"/>
</dbReference>
<dbReference type="Pfam" id="PF01909">
    <property type="entry name" value="NTP_transf_2"/>
    <property type="match status" value="1"/>
</dbReference>
<dbReference type="PIRSF" id="PIRSF006288">
    <property type="entry name" value="PII_uridyltransf"/>
    <property type="match status" value="1"/>
</dbReference>
<dbReference type="SMART" id="SM00471">
    <property type="entry name" value="HDc"/>
    <property type="match status" value="1"/>
</dbReference>
<dbReference type="SUPFAM" id="SSF55021">
    <property type="entry name" value="ACT-like"/>
    <property type="match status" value="2"/>
</dbReference>
<dbReference type="SUPFAM" id="SSF81301">
    <property type="entry name" value="Nucleotidyltransferase"/>
    <property type="match status" value="1"/>
</dbReference>
<dbReference type="SUPFAM" id="SSF81593">
    <property type="entry name" value="Nucleotidyltransferase substrate binding subunit/domain"/>
    <property type="match status" value="1"/>
</dbReference>
<dbReference type="SUPFAM" id="SSF81891">
    <property type="entry name" value="Poly A polymerase C-terminal region-like"/>
    <property type="match status" value="1"/>
</dbReference>
<dbReference type="PROSITE" id="PS51671">
    <property type="entry name" value="ACT"/>
    <property type="match status" value="2"/>
</dbReference>
<dbReference type="PROSITE" id="PS51831">
    <property type="entry name" value="HD"/>
    <property type="match status" value="1"/>
</dbReference>
<accession>A6WV84</accession>
<proteinExistence type="inferred from homology"/>
<protein>
    <recommendedName>
        <fullName evidence="1">Bifunctional uridylyltransferase/uridylyl-removing enzyme</fullName>
        <shortName evidence="1">UTase/UR</shortName>
    </recommendedName>
    <alternativeName>
        <fullName evidence="1">Bifunctional [protein-PII] modification enzyme</fullName>
    </alternativeName>
    <alternativeName>
        <fullName evidence="1">Bifunctional nitrogen sensor protein</fullName>
    </alternativeName>
    <domain>
        <recommendedName>
            <fullName evidence="1">[Protein-PII] uridylyltransferase</fullName>
            <shortName evidence="1">PII uridylyltransferase</shortName>
            <shortName evidence="1">UTase</shortName>
            <ecNumber evidence="1">2.7.7.59</ecNumber>
        </recommendedName>
    </domain>
    <domain>
        <recommendedName>
            <fullName evidence="1">[Protein-PII]-UMP uridylyl-removing enzyme</fullName>
            <shortName evidence="1">UR</shortName>
            <ecNumber evidence="1">3.1.4.-</ecNumber>
        </recommendedName>
    </domain>
</protein>
<keyword id="KW-0378">Hydrolase</keyword>
<keyword id="KW-0460">Magnesium</keyword>
<keyword id="KW-0511">Multifunctional enzyme</keyword>
<keyword id="KW-0548">Nucleotidyltransferase</keyword>
<keyword id="KW-1185">Reference proteome</keyword>
<keyword id="KW-0677">Repeat</keyword>
<keyword id="KW-0808">Transferase</keyword>
<comment type="function">
    <text evidence="1">Modifies, by uridylylation and deuridylylation, the PII regulatory proteins (GlnB and homologs), in response to the nitrogen status of the cell that GlnD senses through the glutamine level. Under low glutamine levels, catalyzes the conversion of the PII proteins and UTP to PII-UMP and PPi, while under higher glutamine levels, GlnD hydrolyzes PII-UMP to PII and UMP (deuridylylation). Thus, controls uridylylation state and activity of the PII proteins, and plays an important role in the regulation of nitrogen assimilation and metabolism.</text>
</comment>
<comment type="catalytic activity">
    <reaction evidence="1">
        <text>[protein-PII]-L-tyrosine + UTP = [protein-PII]-uridylyl-L-tyrosine + diphosphate</text>
        <dbReference type="Rhea" id="RHEA:13673"/>
        <dbReference type="Rhea" id="RHEA-COMP:12147"/>
        <dbReference type="Rhea" id="RHEA-COMP:12148"/>
        <dbReference type="ChEBI" id="CHEBI:33019"/>
        <dbReference type="ChEBI" id="CHEBI:46398"/>
        <dbReference type="ChEBI" id="CHEBI:46858"/>
        <dbReference type="ChEBI" id="CHEBI:90602"/>
        <dbReference type="EC" id="2.7.7.59"/>
    </reaction>
</comment>
<comment type="catalytic activity">
    <reaction evidence="1">
        <text>[protein-PII]-uridylyl-L-tyrosine + H2O = [protein-PII]-L-tyrosine + UMP + H(+)</text>
        <dbReference type="Rhea" id="RHEA:48600"/>
        <dbReference type="Rhea" id="RHEA-COMP:12147"/>
        <dbReference type="Rhea" id="RHEA-COMP:12148"/>
        <dbReference type="ChEBI" id="CHEBI:15377"/>
        <dbReference type="ChEBI" id="CHEBI:15378"/>
        <dbReference type="ChEBI" id="CHEBI:46858"/>
        <dbReference type="ChEBI" id="CHEBI:57865"/>
        <dbReference type="ChEBI" id="CHEBI:90602"/>
    </reaction>
</comment>
<comment type="cofactor">
    <cofactor evidence="1">
        <name>Mg(2+)</name>
        <dbReference type="ChEBI" id="CHEBI:18420"/>
    </cofactor>
</comment>
<comment type="activity regulation">
    <text evidence="1">Uridylyltransferase (UTase) activity is inhibited by glutamine, while glutamine activates uridylyl-removing (UR) activity.</text>
</comment>
<comment type="domain">
    <text evidence="1">Has four distinct domains: an N-terminal nucleotidyltransferase (NT) domain responsible for UTase activity, a central HD domain that encodes UR activity, and two C-terminal ACT domains that seem to have a role in glutamine sensing.</text>
</comment>
<comment type="similarity">
    <text evidence="1">Belongs to the GlnD family.</text>
</comment>
<evidence type="ECO:0000255" key="1">
    <source>
        <dbReference type="HAMAP-Rule" id="MF_00277"/>
    </source>
</evidence>
<evidence type="ECO:0000255" key="2">
    <source>
        <dbReference type="PROSITE-ProRule" id="PRU01175"/>
    </source>
</evidence>